<protein>
    <recommendedName>
        <fullName>Myelin and lymphocyte protein</fullName>
    </recommendedName>
    <alternativeName>
        <fullName>17 kDa myelin vesicular protein</fullName>
        <shortName>MVP17</shortName>
    </alternativeName>
    <alternativeName>
        <fullName>NS 3</fullName>
    </alternativeName>
    <alternativeName>
        <fullName>T-lymphocyte maturation-associated protein</fullName>
    </alternativeName>
</protein>
<feature type="chain" id="PRO_0000156807" description="Myelin and lymphocyte protein">
    <location>
        <begin position="1"/>
        <end position="153"/>
    </location>
</feature>
<feature type="topological domain" description="Cytoplasmic" evidence="4">
    <location>
        <begin position="1"/>
        <end position="24"/>
    </location>
</feature>
<feature type="transmembrane region" description="Helical" evidence="4">
    <location>
        <begin position="25"/>
        <end position="46"/>
    </location>
</feature>
<feature type="topological domain" description="Extracellular" evidence="4">
    <location>
        <begin position="47"/>
        <end position="53"/>
    </location>
</feature>
<feature type="transmembrane region" description="Helical" evidence="4">
    <location>
        <begin position="54"/>
        <end position="75"/>
    </location>
</feature>
<feature type="topological domain" description="Cytoplasmic" evidence="4">
    <location>
        <begin position="76"/>
        <end position="92"/>
    </location>
</feature>
<feature type="transmembrane region" description="Helical" evidence="4">
    <location>
        <begin position="93"/>
        <end position="114"/>
    </location>
</feature>
<feature type="topological domain" description="Extracellular" evidence="4">
    <location>
        <begin position="115"/>
        <end position="125"/>
    </location>
</feature>
<feature type="transmembrane region" description="Helical" evidence="4">
    <location>
        <begin position="126"/>
        <end position="147"/>
    </location>
</feature>
<feature type="topological domain" description="Cytoplasmic" evidence="4">
    <location>
        <begin position="148"/>
        <end position="153"/>
    </location>
</feature>
<feature type="domain" description="MARVEL" evidence="5">
    <location>
        <begin position="18"/>
        <end position="151"/>
    </location>
</feature>
<gene>
    <name type="primary">Mal</name>
    <name type="synonym">Mvp17</name>
</gene>
<proteinExistence type="evidence at transcript level"/>
<evidence type="ECO:0000250" key="1"/>
<evidence type="ECO:0000250" key="2">
    <source>
        <dbReference type="UniProtKB" id="O09198"/>
    </source>
</evidence>
<evidence type="ECO:0000250" key="3">
    <source>
        <dbReference type="UniProtKB" id="P21145"/>
    </source>
</evidence>
<evidence type="ECO:0000255" key="4"/>
<evidence type="ECO:0000255" key="5">
    <source>
        <dbReference type="PROSITE-ProRule" id="PRU00581"/>
    </source>
</evidence>
<evidence type="ECO:0000305" key="6"/>
<sequence length="153" mass="16758">MAPAAASGGSTLPSGFSVFVTFPDLLFIFEFIFGGLVWILIASSLVPMPLVQGWVMFVSVFCFLATTSLMVMYIIGTHGGETSWITLDAAYHCVAALFYLSASVLEALATITMFDGFTYRHYHENIAAVVFAYVATLLYVIHAVFSLIRWKSS</sequence>
<dbReference type="EMBL" id="U31367">
    <property type="protein sequence ID" value="AAC52366.1"/>
    <property type="molecule type" value="mRNA"/>
</dbReference>
<dbReference type="EMBL" id="X82557">
    <property type="protein sequence ID" value="CAA57903.1"/>
    <property type="molecule type" value="mRNA"/>
</dbReference>
<dbReference type="EMBL" id="BC085755">
    <property type="protein sequence ID" value="AAH85755.1"/>
    <property type="molecule type" value="mRNA"/>
</dbReference>
<dbReference type="RefSeq" id="NP_036930.1">
    <property type="nucleotide sequence ID" value="NM_012798.2"/>
</dbReference>
<dbReference type="SMR" id="Q64349"/>
<dbReference type="DIP" id="DIP-46222N"/>
<dbReference type="FunCoup" id="Q64349">
    <property type="interactions" value="70"/>
</dbReference>
<dbReference type="IntAct" id="Q64349">
    <property type="interactions" value="1"/>
</dbReference>
<dbReference type="STRING" id="10116.ENSRNOP00000020870"/>
<dbReference type="PaxDb" id="10116-ENSRNOP00000020870"/>
<dbReference type="Ensembl" id="ENSRNOT00000020870.3">
    <property type="protein sequence ID" value="ENSRNOP00000020870.1"/>
    <property type="gene ID" value="ENSRNOG00000015445.5"/>
</dbReference>
<dbReference type="GeneID" id="25263"/>
<dbReference type="KEGG" id="rno:25263"/>
<dbReference type="UCSC" id="RGD:3037">
    <property type="organism name" value="rat"/>
</dbReference>
<dbReference type="AGR" id="RGD:3037"/>
<dbReference type="CTD" id="4118"/>
<dbReference type="RGD" id="3037">
    <property type="gene designation" value="Mal"/>
</dbReference>
<dbReference type="eggNOG" id="KOG4788">
    <property type="taxonomic scope" value="Eukaryota"/>
</dbReference>
<dbReference type="GeneTree" id="ENSGT00940000154987"/>
<dbReference type="HOGENOM" id="CLU_112950_0_0_1"/>
<dbReference type="InParanoid" id="Q64349"/>
<dbReference type="OMA" id="YIINAHG"/>
<dbReference type="OrthoDB" id="9940869at2759"/>
<dbReference type="PhylomeDB" id="Q64349"/>
<dbReference type="TreeFam" id="TF316174"/>
<dbReference type="PRO" id="PR:Q64349"/>
<dbReference type="Proteomes" id="UP000002494">
    <property type="component" value="Chromosome 3"/>
</dbReference>
<dbReference type="Bgee" id="ENSRNOG00000015445">
    <property type="expression patterns" value="Expressed in stomach and 19 other cell types or tissues"/>
</dbReference>
<dbReference type="GO" id="GO:0016324">
    <property type="term" value="C:apical plasma membrane"/>
    <property type="evidence" value="ECO:0000266"/>
    <property type="project" value="RGD"/>
</dbReference>
<dbReference type="GO" id="GO:0005783">
    <property type="term" value="C:endoplasmic reticulum"/>
    <property type="evidence" value="ECO:0000266"/>
    <property type="project" value="RGD"/>
</dbReference>
<dbReference type="GO" id="GO:0120003">
    <property type="term" value="C:hinge region between urothelial plaques of apical plasma membrane"/>
    <property type="evidence" value="ECO:0000266"/>
    <property type="project" value="RGD"/>
</dbReference>
<dbReference type="GO" id="GO:0016020">
    <property type="term" value="C:membrane"/>
    <property type="evidence" value="ECO:0000318"/>
    <property type="project" value="GO_Central"/>
</dbReference>
<dbReference type="GO" id="GO:0045121">
    <property type="term" value="C:membrane raft"/>
    <property type="evidence" value="ECO:0000266"/>
    <property type="project" value="RGD"/>
</dbReference>
<dbReference type="GO" id="GO:0044853">
    <property type="term" value="C:plasma membrane raft"/>
    <property type="evidence" value="ECO:0000266"/>
    <property type="project" value="RGD"/>
</dbReference>
<dbReference type="GO" id="GO:0043220">
    <property type="term" value="C:Schmidt-Lanterman incisure"/>
    <property type="evidence" value="ECO:0000314"/>
    <property type="project" value="RGD"/>
</dbReference>
<dbReference type="GO" id="GO:0019911">
    <property type="term" value="F:structural constituent of myelin sheath"/>
    <property type="evidence" value="ECO:0000314"/>
    <property type="project" value="RGD"/>
</dbReference>
<dbReference type="GO" id="GO:0022010">
    <property type="term" value="P:central nervous system myelination"/>
    <property type="evidence" value="ECO:0000266"/>
    <property type="project" value="RGD"/>
</dbReference>
<dbReference type="GO" id="GO:0042552">
    <property type="term" value="P:myelination"/>
    <property type="evidence" value="ECO:0000314"/>
    <property type="project" value="RGD"/>
</dbReference>
<dbReference type="GO" id="GO:1902043">
    <property type="term" value="P:positive regulation of extrinsic apoptotic signaling pathway via death domain receptors"/>
    <property type="evidence" value="ECO:0000266"/>
    <property type="project" value="RGD"/>
</dbReference>
<dbReference type="GO" id="GO:0098737">
    <property type="term" value="P:protein insertion into plasma membrane"/>
    <property type="evidence" value="ECO:0000250"/>
    <property type="project" value="UniProtKB"/>
</dbReference>
<dbReference type="GO" id="GO:0002175">
    <property type="term" value="P:protein localization to paranode region of axon"/>
    <property type="evidence" value="ECO:0000266"/>
    <property type="project" value="RGD"/>
</dbReference>
<dbReference type="InterPro" id="IPR013295">
    <property type="entry name" value="MAL"/>
</dbReference>
<dbReference type="InterPro" id="IPR008253">
    <property type="entry name" value="Marvel"/>
</dbReference>
<dbReference type="InterPro" id="IPR050578">
    <property type="entry name" value="MARVEL-CKLF_proteins"/>
</dbReference>
<dbReference type="PANTHER" id="PTHR22776">
    <property type="entry name" value="MARVEL-CONTAINING POTENTIAL LIPID RAFT-ASSOCIATED PROTEIN"/>
    <property type="match status" value="1"/>
</dbReference>
<dbReference type="PANTHER" id="PTHR22776:SF12">
    <property type="entry name" value="MYELIN AND LYMPHOCYTE PROTEIN"/>
    <property type="match status" value="1"/>
</dbReference>
<dbReference type="Pfam" id="PF01284">
    <property type="entry name" value="MARVEL"/>
    <property type="match status" value="1"/>
</dbReference>
<dbReference type="PRINTS" id="PR01884">
    <property type="entry name" value="MALPROTEIN"/>
</dbReference>
<dbReference type="PROSITE" id="PS51225">
    <property type="entry name" value="MARVEL"/>
    <property type="match status" value="1"/>
</dbReference>
<comment type="function">
    <text evidence="2">May be involved in vesicular trafficking from the Golgi apparatus to the cell membrane. Plays a role in the maintenance of the myelin sheath, and in axon-glia and glia-glia interactions.</text>
</comment>
<comment type="subunit">
    <text evidence="3">Interacts with PLP1.</text>
</comment>
<comment type="subcellular location">
    <subcellularLocation>
        <location>Membrane</location>
        <topology>Multi-pass membrane protein</topology>
    </subcellularLocation>
    <subcellularLocation>
        <location evidence="3">Cell membrane</location>
    </subcellularLocation>
    <text evidence="2">Found in lipid rafts.</text>
</comment>
<comment type="tissue specificity">
    <text>Exclusively expressed in white and gray matter oligodendrocytes in the CNS and in myelinating Schwann cells in peripheral nerves. Higher levels are found in the PNS than in the CNS or spinal cord, in the gray matter than in the white. Weak expression also found in spleen and kidney.</text>
</comment>
<comment type="developmental stage">
    <text>Detected just before birth in Schwann cells and after birth in oligodendrocytes of brainstem and spinal cord.</text>
</comment>
<comment type="induction">
    <text>Up-regulated during myelination.</text>
</comment>
<comment type="PTM">
    <text evidence="1">Lipoprotein.</text>
</comment>
<comment type="similarity">
    <text evidence="6">Belongs to the MAL family.</text>
</comment>
<reference key="1">
    <citation type="journal article" date="1995" name="J. Neurosci. Res.">
        <title>Cloning and characterization of MVP17: a developmentally regulated myelin protein in oligodendrocytes.</title>
        <authorList>
            <person name="Kim T."/>
            <person name="Fiedler K."/>
            <person name="Madison D.L."/>
            <person name="Krueger W.H."/>
            <person name="Pfeiffer S.E."/>
        </authorList>
    </citation>
    <scope>NUCLEOTIDE SEQUENCE [MRNA]</scope>
    <source>
        <strain>Sprague-Dawley</strain>
        <tissue>Brain</tissue>
    </source>
</reference>
<reference key="2">
    <citation type="journal article" date="1995" name="J. Neurosci.">
        <title>Characterization of a rat gene, rMAL, encoding a protein with four hydrophobic domains in central and peripheral myelin.</title>
        <authorList>
            <person name="Schaeren-Wiemers N."/>
            <person name="Valenzuela D.M."/>
            <person name="Frank M."/>
            <person name="Schwab M.E."/>
        </authorList>
    </citation>
    <scope>NUCLEOTIDE SEQUENCE [MRNA]</scope>
    <source>
        <strain>Lewis</strain>
        <tissue>Spinal cord</tissue>
    </source>
</reference>
<reference key="3">
    <citation type="journal article" date="2004" name="Genome Res.">
        <title>The status, quality, and expansion of the NIH full-length cDNA project: the Mammalian Gene Collection (MGC).</title>
        <authorList>
            <consortium name="The MGC Project Team"/>
        </authorList>
    </citation>
    <scope>NUCLEOTIDE SEQUENCE [LARGE SCALE MRNA]</scope>
    <source>
        <tissue>Kidney</tissue>
    </source>
</reference>
<accession>Q64349</accession>
<name>MAL_RAT</name>
<keyword id="KW-1003">Cell membrane</keyword>
<keyword id="KW-0449">Lipoprotein</keyword>
<keyword id="KW-0472">Membrane</keyword>
<keyword id="KW-1185">Reference proteome</keyword>
<keyword id="KW-0812">Transmembrane</keyword>
<keyword id="KW-1133">Transmembrane helix</keyword>
<organism>
    <name type="scientific">Rattus norvegicus</name>
    <name type="common">Rat</name>
    <dbReference type="NCBI Taxonomy" id="10116"/>
    <lineage>
        <taxon>Eukaryota</taxon>
        <taxon>Metazoa</taxon>
        <taxon>Chordata</taxon>
        <taxon>Craniata</taxon>
        <taxon>Vertebrata</taxon>
        <taxon>Euteleostomi</taxon>
        <taxon>Mammalia</taxon>
        <taxon>Eutheria</taxon>
        <taxon>Euarchontoglires</taxon>
        <taxon>Glires</taxon>
        <taxon>Rodentia</taxon>
        <taxon>Myomorpha</taxon>
        <taxon>Muroidea</taxon>
        <taxon>Muridae</taxon>
        <taxon>Murinae</taxon>
        <taxon>Rattus</taxon>
    </lineage>
</organism>